<evidence type="ECO:0000250" key="1"/>
<evidence type="ECO:0000250" key="2">
    <source>
        <dbReference type="UniProtKB" id="Q13765"/>
    </source>
</evidence>
<evidence type="ECO:0000255" key="3">
    <source>
        <dbReference type="PROSITE-ProRule" id="PRU00507"/>
    </source>
</evidence>
<evidence type="ECO:0000256" key="4">
    <source>
        <dbReference type="SAM" id="MobiDB-lite"/>
    </source>
</evidence>
<evidence type="ECO:0000269" key="5">
    <source>
    </source>
</evidence>
<evidence type="ECO:0000305" key="6"/>
<evidence type="ECO:0007744" key="7">
    <source>
    </source>
</evidence>
<dbReference type="EMBL" id="AJ278883">
    <property type="protein sequence ID" value="CAC06614.1"/>
    <property type="molecule type" value="Genomic_DNA"/>
</dbReference>
<dbReference type="EMBL" id="BC062710">
    <property type="protein sequence ID" value="AAH62710.1"/>
    <property type="molecule type" value="mRNA"/>
</dbReference>
<dbReference type="EMBL" id="DQ120612">
    <property type="protein sequence ID" value="ABB92399.1"/>
    <property type="molecule type" value="Genomic_DNA"/>
</dbReference>
<dbReference type="CCDS" id="CCDS11630.1"/>
<dbReference type="RefSeq" id="NP_954984.1">
    <property type="nucleotide sequence ID" value="NM_199290.4"/>
</dbReference>
<dbReference type="SMR" id="Q9H009"/>
<dbReference type="BioGRID" id="131183">
    <property type="interactions" value="22"/>
</dbReference>
<dbReference type="FunCoup" id="Q9H009">
    <property type="interactions" value="462"/>
</dbReference>
<dbReference type="IntAct" id="Q9H009">
    <property type="interactions" value="3"/>
</dbReference>
<dbReference type="STRING" id="9606.ENSP00000427802"/>
<dbReference type="Allergome" id="412">
    <property type="allergen name" value="Hom s 2"/>
</dbReference>
<dbReference type="GlyGen" id="Q9H009">
    <property type="glycosylation" value="1 site, 1 O-linked glycan (1 site)"/>
</dbReference>
<dbReference type="iPTMnet" id="Q9H009"/>
<dbReference type="PhosphoSitePlus" id="Q9H009"/>
<dbReference type="BioMuta" id="NACA2"/>
<dbReference type="DMDM" id="74733511"/>
<dbReference type="jPOST" id="Q9H009"/>
<dbReference type="MassIVE" id="Q9H009"/>
<dbReference type="PaxDb" id="9606-ENSP00000427802"/>
<dbReference type="PeptideAtlas" id="Q9H009"/>
<dbReference type="ProteomicsDB" id="80194"/>
<dbReference type="Antibodypedia" id="57003">
    <property type="antibodies" value="46 antibodies from 11 providers"/>
</dbReference>
<dbReference type="DNASU" id="342538"/>
<dbReference type="Ensembl" id="ENST00000521764.3">
    <property type="protein sequence ID" value="ENSP00000427802.1"/>
    <property type="gene ID" value="ENSG00000253506.3"/>
</dbReference>
<dbReference type="GeneID" id="342538"/>
<dbReference type="KEGG" id="hsa:342538"/>
<dbReference type="MANE-Select" id="ENST00000521764.3">
    <property type="protein sequence ID" value="ENSP00000427802.1"/>
    <property type="RefSeq nucleotide sequence ID" value="NM_199290.4"/>
    <property type="RefSeq protein sequence ID" value="NP_954984.1"/>
</dbReference>
<dbReference type="UCSC" id="uc002izj.3">
    <property type="organism name" value="human"/>
</dbReference>
<dbReference type="AGR" id="HGNC:23290"/>
<dbReference type="CTD" id="342538"/>
<dbReference type="DisGeNET" id="342538"/>
<dbReference type="GeneCards" id="NACA2"/>
<dbReference type="HGNC" id="HGNC:23290">
    <property type="gene designation" value="NACA2"/>
</dbReference>
<dbReference type="HPA" id="ENSG00000253506">
    <property type="expression patterns" value="Tissue enriched (testis)"/>
</dbReference>
<dbReference type="MIM" id="609274">
    <property type="type" value="gene"/>
</dbReference>
<dbReference type="neXtProt" id="NX_Q9H009"/>
<dbReference type="OpenTargets" id="ENSG00000253506"/>
<dbReference type="PharmGKB" id="PA162396699"/>
<dbReference type="VEuPathDB" id="HostDB:ENSG00000253506"/>
<dbReference type="eggNOG" id="KOG2239">
    <property type="taxonomic scope" value="Eukaryota"/>
</dbReference>
<dbReference type="GeneTree" id="ENSGT00940000166484"/>
<dbReference type="HOGENOM" id="CLU_057806_1_2_1"/>
<dbReference type="InParanoid" id="Q9H009"/>
<dbReference type="OMA" id="SQKMIFA"/>
<dbReference type="OrthoDB" id="3169036at2759"/>
<dbReference type="PAN-GO" id="Q9H009">
    <property type="GO annotations" value="3 GO annotations based on evolutionary models"/>
</dbReference>
<dbReference type="PhylomeDB" id="Q9H009"/>
<dbReference type="TreeFam" id="TF313348"/>
<dbReference type="PathwayCommons" id="Q9H009"/>
<dbReference type="BioGRID-ORCS" id="342538">
    <property type="hits" value="22 hits in 1114 CRISPR screens"/>
</dbReference>
<dbReference type="ChiTaRS" id="NACA2">
    <property type="organism name" value="human"/>
</dbReference>
<dbReference type="GenomeRNAi" id="342538"/>
<dbReference type="Pharos" id="Q9H009">
    <property type="development level" value="Tdark"/>
</dbReference>
<dbReference type="PRO" id="PR:Q9H009"/>
<dbReference type="Proteomes" id="UP000005640">
    <property type="component" value="Chromosome 17"/>
</dbReference>
<dbReference type="RNAct" id="Q9H009">
    <property type="molecule type" value="protein"/>
</dbReference>
<dbReference type="Bgee" id="ENSG00000253506">
    <property type="expression patterns" value="Expressed in left testis and 102 other cell types or tissues"/>
</dbReference>
<dbReference type="GO" id="GO:0005737">
    <property type="term" value="C:cytoplasm"/>
    <property type="evidence" value="ECO:0000318"/>
    <property type="project" value="GO_Central"/>
</dbReference>
<dbReference type="GO" id="GO:0005854">
    <property type="term" value="C:nascent polypeptide-associated complex"/>
    <property type="evidence" value="ECO:0007669"/>
    <property type="project" value="InterPro"/>
</dbReference>
<dbReference type="GO" id="GO:0005634">
    <property type="term" value="C:nucleus"/>
    <property type="evidence" value="ECO:0007669"/>
    <property type="project" value="UniProtKB-SubCell"/>
</dbReference>
<dbReference type="GO" id="GO:0051082">
    <property type="term" value="F:unfolded protein binding"/>
    <property type="evidence" value="ECO:0000318"/>
    <property type="project" value="GO_Central"/>
</dbReference>
<dbReference type="GO" id="GO:0006612">
    <property type="term" value="P:protein targeting to membrane"/>
    <property type="evidence" value="ECO:0000318"/>
    <property type="project" value="GO_Central"/>
</dbReference>
<dbReference type="GO" id="GO:0015031">
    <property type="term" value="P:protein transport"/>
    <property type="evidence" value="ECO:0007669"/>
    <property type="project" value="UniProtKB-KW"/>
</dbReference>
<dbReference type="CDD" id="cd22054">
    <property type="entry name" value="NAC_NACA"/>
    <property type="match status" value="1"/>
</dbReference>
<dbReference type="CDD" id="cd14415">
    <property type="entry name" value="UBA_NACA_NACP1"/>
    <property type="match status" value="1"/>
</dbReference>
<dbReference type="FunFam" id="2.20.70.30:FF:000002">
    <property type="entry name" value="Nascent polypeptide-associated complex (NAC), alpha subunit"/>
    <property type="match status" value="1"/>
</dbReference>
<dbReference type="FunFam" id="1.10.8.10:FF:000006">
    <property type="entry name" value="Putative nascent polypeptide-associated complex subunit alpha"/>
    <property type="match status" value="1"/>
</dbReference>
<dbReference type="Gene3D" id="1.10.8.10">
    <property type="entry name" value="DNA helicase RuvA subunit, C-terminal domain"/>
    <property type="match status" value="1"/>
</dbReference>
<dbReference type="Gene3D" id="2.20.70.30">
    <property type="entry name" value="Nascent polypeptide-associated complex domain"/>
    <property type="match status" value="1"/>
</dbReference>
<dbReference type="InterPro" id="IPR016641">
    <property type="entry name" value="EGD2/NACA0like"/>
</dbReference>
<dbReference type="InterPro" id="IPR044034">
    <property type="entry name" value="NAC-like_UBA"/>
</dbReference>
<dbReference type="InterPro" id="IPR038187">
    <property type="entry name" value="NAC_A/B_dom_sf"/>
</dbReference>
<dbReference type="InterPro" id="IPR002715">
    <property type="entry name" value="Nas_poly-pep-assoc_cplx_dom"/>
</dbReference>
<dbReference type="PANTHER" id="PTHR21713">
    <property type="entry name" value="NASCENT POLYPEPTIDE ASSOCIATED COMPLEX ALPHA SUBUNIT-RELATED"/>
    <property type="match status" value="1"/>
</dbReference>
<dbReference type="Pfam" id="PF01849">
    <property type="entry name" value="NAC"/>
    <property type="match status" value="1"/>
</dbReference>
<dbReference type="Pfam" id="PF19026">
    <property type="entry name" value="UBA_HYPK"/>
    <property type="match status" value="1"/>
</dbReference>
<dbReference type="PIRSF" id="PIRSF015901">
    <property type="entry name" value="NAC_alpha"/>
    <property type="match status" value="1"/>
</dbReference>
<dbReference type="SMART" id="SM01407">
    <property type="entry name" value="NAC"/>
    <property type="match status" value="1"/>
</dbReference>
<dbReference type="PROSITE" id="PS51151">
    <property type="entry name" value="NAC_AB"/>
    <property type="match status" value="1"/>
</dbReference>
<gene>
    <name type="primary">NACA2</name>
    <name type="synonym">NACAL</name>
</gene>
<name>NACA2_HUMAN</name>
<accession>Q9H009</accession>
<accession>Q2VIR9</accession>
<organism>
    <name type="scientific">Homo sapiens</name>
    <name type="common">Human</name>
    <dbReference type="NCBI Taxonomy" id="9606"/>
    <lineage>
        <taxon>Eukaryota</taxon>
        <taxon>Metazoa</taxon>
        <taxon>Chordata</taxon>
        <taxon>Craniata</taxon>
        <taxon>Vertebrata</taxon>
        <taxon>Euteleostomi</taxon>
        <taxon>Mammalia</taxon>
        <taxon>Eutheria</taxon>
        <taxon>Euarchontoglires</taxon>
        <taxon>Primates</taxon>
        <taxon>Haplorrhini</taxon>
        <taxon>Catarrhini</taxon>
        <taxon>Hominidae</taxon>
        <taxon>Homo</taxon>
    </lineage>
</organism>
<comment type="function">
    <text evidence="1">Prevents inappropriate targeting of non-secretory polypeptides to the endoplasmic reticulum (ER). Binds to nascent polypeptide chains as they emerge from the ribosome and blocks their interaction with the signal recognition particle (SRP), which normally targets nascent secretory peptides to the ER. Also reduces the inherent affinity of ribosomes for protein translocation sites in the ER membrane (M sites) (By similarity).</text>
</comment>
<comment type="subunit">
    <text evidence="1">Part of the nascent polypeptide-associated complex (NAC), consisting of NACA and BTF3. NAC associates with ribosomes through the BTF3 subunit. Both subunits can contact nascent polypeptide chains (By similarity).</text>
</comment>
<comment type="subcellular location">
    <subcellularLocation>
        <location evidence="1">Cytoplasm</location>
    </subcellularLocation>
    <subcellularLocation>
        <location evidence="1">Nucleus</location>
    </subcellularLocation>
</comment>
<comment type="tissue specificity">
    <text evidence="5">Expressed specifically in testis and skeletal muscle.</text>
</comment>
<comment type="miscellaneous">
    <text>NACAL arose from a recent (40-63 million-year-old), anthropoid primate-specific retroduplication of NACA.</text>
</comment>
<comment type="similarity">
    <text evidence="6">Belongs to the NAC-alpha family.</text>
</comment>
<sequence>MPGEATETVPATEQELPQSQAETGSGTASDSGESVPGIEEQDSTQTTTQKAWLVAAAEIDEEPVGKAKQSRSEKRARKAMSKLGLLQVTGVTRVTIWKSKNILFVITKLDVYKSPASDAYIVFGEAKIQDLSQQAQLAAAEKFRVQGEAVGNIQENTQTPTVQEESEEEEVDETGVEVKDVKLVMSQANVSRAKAVRALKNNSNDIVNAIMELTV</sequence>
<keyword id="KW-0007">Acetylation</keyword>
<keyword id="KW-0963">Cytoplasm</keyword>
<keyword id="KW-1017">Isopeptide bond</keyword>
<keyword id="KW-0539">Nucleus</keyword>
<keyword id="KW-0597">Phosphoprotein</keyword>
<keyword id="KW-0653">Protein transport</keyword>
<keyword id="KW-1267">Proteomics identification</keyword>
<keyword id="KW-1185">Reference proteome</keyword>
<keyword id="KW-0813">Transport</keyword>
<keyword id="KW-0832">Ubl conjugation</keyword>
<protein>
    <recommendedName>
        <fullName>Nascent polypeptide-associated complex subunit alpha-2</fullName>
    </recommendedName>
    <alternativeName>
        <fullName>Alpha-NAC-like</fullName>
    </alternativeName>
    <alternativeName>
        <fullName>Hom s 2.01</fullName>
    </alternativeName>
    <alternativeName>
        <fullName>Nascent polypeptide-associated complex subunit alpha-like</fullName>
        <shortName>NAC-alpha-like</shortName>
    </alternativeName>
</protein>
<feature type="chain" id="PRO_0000280746" description="Nascent polypeptide-associated complex subunit alpha-2">
    <location>
        <begin position="1"/>
        <end position="215"/>
    </location>
</feature>
<feature type="domain" description="NAC-A/B" evidence="3">
    <location>
        <begin position="70"/>
        <end position="135"/>
    </location>
</feature>
<feature type="domain" description="UBA">
    <location>
        <begin position="176"/>
        <end position="213"/>
    </location>
</feature>
<feature type="region of interest" description="Disordered" evidence="4">
    <location>
        <begin position="1"/>
        <end position="51"/>
    </location>
</feature>
<feature type="compositionally biased region" description="Polar residues" evidence="4">
    <location>
        <begin position="9"/>
        <end position="32"/>
    </location>
</feature>
<feature type="modified residue" description="Phosphoserine" evidence="2">
    <location>
        <position position="43"/>
    </location>
</feature>
<feature type="modified residue" description="Phosphoserine" evidence="2">
    <location>
        <position position="132"/>
    </location>
</feature>
<feature type="modified residue" description="N6-acetyllysine; alternate" evidence="2">
    <location>
        <position position="142"/>
    </location>
</feature>
<feature type="modified residue" description="Phosphothreonine" evidence="2">
    <location>
        <position position="161"/>
    </location>
</feature>
<feature type="modified residue" description="Phosphoserine" evidence="2">
    <location>
        <position position="166"/>
    </location>
</feature>
<feature type="modified residue" description="Phosphoserine" evidence="2">
    <location>
        <position position="186"/>
    </location>
</feature>
<feature type="modified residue" description="Phosphoserine" evidence="2">
    <location>
        <position position="191"/>
    </location>
</feature>
<feature type="modified residue" description="Phosphoserine" evidence="2">
    <location>
        <position position="203"/>
    </location>
</feature>
<feature type="modified residue" description="Phosphothreonine" evidence="7">
    <location>
        <position position="214"/>
    </location>
</feature>
<feature type="cross-link" description="Glycyl lysine isopeptide (Lys-Gly) (interchain with G-Cter in SUMO2); alternate" evidence="2">
    <location>
        <position position="142"/>
    </location>
</feature>
<feature type="sequence variant" id="VAR_050218" description="In dbSNP:rs17531723.">
    <original>V</original>
    <variation>I</variation>
    <location>
        <position position="64"/>
    </location>
</feature>
<proteinExistence type="evidence at protein level"/>
<reference key="1">
    <citation type="journal article" date="2002" name="J. Invest. Dermatol.">
        <title>Characterization of a novel isoform of alpha-nascent polypeptide-associated complex as IgE-defined autoantigen.</title>
        <authorList>
            <person name="Mossabeb R."/>
            <person name="Seiberler S."/>
            <person name="Mittermann I."/>
            <person name="Reininger R."/>
            <person name="Spitzauer S."/>
            <person name="Natter S."/>
            <person name="Verdino P."/>
            <person name="Keller W."/>
            <person name="Kraft D."/>
            <person name="Valenta R."/>
        </authorList>
    </citation>
    <scope>NUCLEOTIDE SEQUENCE [GENOMIC DNA]</scope>
    <source>
        <tissue>Epithelium</tissue>
    </source>
</reference>
<reference key="2">
    <citation type="journal article" date="2004" name="Genome Res.">
        <title>The status, quality, and expansion of the NIH full-length cDNA project: the Mammalian Gene Collection (MGC).</title>
        <authorList>
            <consortium name="The MGC Project Team"/>
        </authorList>
    </citation>
    <scope>NUCLEOTIDE SEQUENCE [LARGE SCALE MRNA]</scope>
    <source>
        <tissue>Testis</tissue>
    </source>
</reference>
<reference key="3">
    <citation type="journal article" date="2005" name="PLoS Biol.">
        <title>Emergence of young human genes after a burst of retroposition in primates.</title>
        <authorList>
            <person name="Marques A.C."/>
            <person name="Dupanloup I."/>
            <person name="Vinckenbosch N."/>
            <person name="Reymond A."/>
            <person name="Kaessmann H."/>
        </authorList>
    </citation>
    <scope>NUCLEOTIDE SEQUENCE [GENOMIC DNA] OF 1-210</scope>
    <scope>TISSUE SPECIFICITY</scope>
</reference>
<reference key="4">
    <citation type="journal article" date="2009" name="Sci. Signal.">
        <title>Quantitative phosphoproteomic analysis of T cell receptor signaling reveals system-wide modulation of protein-protein interactions.</title>
        <authorList>
            <person name="Mayya V."/>
            <person name="Lundgren D.H."/>
            <person name="Hwang S.-I."/>
            <person name="Rezaul K."/>
            <person name="Wu L."/>
            <person name="Eng J.K."/>
            <person name="Rodionov V."/>
            <person name="Han D.K."/>
        </authorList>
    </citation>
    <scope>PHOSPHORYLATION [LARGE SCALE ANALYSIS] AT THR-214</scope>
    <scope>IDENTIFICATION BY MASS SPECTROMETRY [LARGE SCALE ANALYSIS]</scope>
    <source>
        <tissue>Leukemic T-cell</tissue>
    </source>
</reference>